<protein>
    <recommendedName>
        <fullName evidence="1 3">Flagellar basal body rod protein FlgB</fullName>
    </recommendedName>
</protein>
<name>FLGB_CERS4</name>
<sequence>MTGFRDQLGVHAQALVLRETRNNLLTSNIANAATPHYKARDIDFGAELARASGNGTLRTTEARHFAAGGPAARGEALYRDPVTPSLDGNTVEMAVEQMEFAENTLRYQTSLALLNRRISGLMTAIKGE</sequence>
<comment type="function">
    <text evidence="1">Structural component of flagellum, the bacterial motility apparatus. Part of the rod structure of flagellar basal body (By similarity).</text>
</comment>
<comment type="subunit">
    <text evidence="1">The basal body constitutes a major portion of the flagellar organelle and consists of a number of rings mounted on a central rod. In Gram-negative bacteria, at least four rings, L, P, S and M are present, whereas Gram-positive bacteria lack the L and P rings. The rod consists of about 26 subunits of FlgG in the distal portion, and FlgB, FlgC and FlgF build up the proximal portion of the rod with about 6 subunits each. Rod assembly occurs by export via the flagellum-specific pathway of its constituent proteins and by their incorporation into the rod structure in the probable order of FlgB, FlgC, FlgF and FlgG. Another protein, FliE, also assembles onto the stable rod structure (By similarity).</text>
</comment>
<comment type="subcellular location">
    <subcellularLocation>
        <location evidence="1">Bacterial flagellum basal body</location>
    </subcellularLocation>
</comment>
<comment type="similarity">
    <text evidence="2">Belongs to the flagella basal body rod proteins family.</text>
</comment>
<evidence type="ECO:0000250" key="1">
    <source>
        <dbReference type="UniProtKB" id="P16437"/>
    </source>
</evidence>
<evidence type="ECO:0000255" key="2"/>
<evidence type="ECO:0000312" key="3">
    <source>
        <dbReference type="EMBL" id="ABA79258.1"/>
    </source>
</evidence>
<keyword id="KW-0975">Bacterial flagellum</keyword>
<keyword id="KW-1185">Reference proteome</keyword>
<feature type="chain" id="PRO_0000415706" description="Flagellar basal body rod protein FlgB">
    <location>
        <begin position="1"/>
        <end position="128"/>
    </location>
</feature>
<dbReference type="EMBL" id="CP000143">
    <property type="protein sequence ID" value="ABA79258.1"/>
    <property type="molecule type" value="Genomic_DNA"/>
</dbReference>
<dbReference type="RefSeq" id="WP_011337979.1">
    <property type="nucleotide sequence ID" value="NC_007493.2"/>
</dbReference>
<dbReference type="RefSeq" id="YP_353159.1">
    <property type="nucleotide sequence ID" value="NC_007493.2"/>
</dbReference>
<dbReference type="SMR" id="Q3J1S6"/>
<dbReference type="STRING" id="272943.RSP_0083"/>
<dbReference type="DNASU" id="3719952"/>
<dbReference type="EnsemblBacteria" id="ABA79258">
    <property type="protein sequence ID" value="ABA79258"/>
    <property type="gene ID" value="RSP_0083"/>
</dbReference>
<dbReference type="GeneID" id="3719952"/>
<dbReference type="KEGG" id="rsp:RSP_0083"/>
<dbReference type="PATRIC" id="fig|272943.9.peg.2023"/>
<dbReference type="eggNOG" id="COG1815">
    <property type="taxonomic scope" value="Bacteria"/>
</dbReference>
<dbReference type="OrthoDB" id="9788334at2"/>
<dbReference type="PhylomeDB" id="Q3J1S6"/>
<dbReference type="Proteomes" id="UP000002703">
    <property type="component" value="Chromosome 1"/>
</dbReference>
<dbReference type="GO" id="GO:0030694">
    <property type="term" value="C:bacterial-type flagellum basal body, rod"/>
    <property type="evidence" value="ECO:0007669"/>
    <property type="project" value="InterPro"/>
</dbReference>
<dbReference type="GO" id="GO:0071978">
    <property type="term" value="P:bacterial-type flagellum-dependent swarming motility"/>
    <property type="evidence" value="ECO:0007669"/>
    <property type="project" value="TreeGrafter"/>
</dbReference>
<dbReference type="InterPro" id="IPR019776">
    <property type="entry name" value="Flagellar_basal_body_rod_CS"/>
</dbReference>
<dbReference type="InterPro" id="IPR006300">
    <property type="entry name" value="FlgB"/>
</dbReference>
<dbReference type="NCBIfam" id="TIGR01396">
    <property type="entry name" value="FlgB"/>
    <property type="match status" value="1"/>
</dbReference>
<dbReference type="PANTHER" id="PTHR30435:SF12">
    <property type="entry name" value="FLAGELLAR BASAL BODY ROD PROTEIN FLGB"/>
    <property type="match status" value="1"/>
</dbReference>
<dbReference type="PANTHER" id="PTHR30435">
    <property type="entry name" value="FLAGELLAR PROTEIN"/>
    <property type="match status" value="1"/>
</dbReference>
<dbReference type="PIRSF" id="PIRSF002889">
    <property type="entry name" value="Rod_FlgB"/>
    <property type="match status" value="1"/>
</dbReference>
<dbReference type="PROSITE" id="PS00588">
    <property type="entry name" value="FLAGELLA_BB_ROD"/>
    <property type="match status" value="1"/>
</dbReference>
<proteinExistence type="inferred from homology"/>
<accession>Q3J1S6</accession>
<organism>
    <name type="scientific">Cereibacter sphaeroides (strain ATCC 17023 / DSM 158 / JCM 6121 / CCUG 31486 / LMG 2827 / NBRC 12203 / NCIMB 8253 / ATH 2.4.1.)</name>
    <name type="common">Rhodobacter sphaeroides</name>
    <dbReference type="NCBI Taxonomy" id="272943"/>
    <lineage>
        <taxon>Bacteria</taxon>
        <taxon>Pseudomonadati</taxon>
        <taxon>Pseudomonadota</taxon>
        <taxon>Alphaproteobacteria</taxon>
        <taxon>Rhodobacterales</taxon>
        <taxon>Paracoccaceae</taxon>
        <taxon>Cereibacter</taxon>
    </lineage>
</organism>
<gene>
    <name evidence="3" type="primary">flgB</name>
    <name type="ordered locus">RHOS4_16900</name>
    <name type="ORF">RSP_0083</name>
</gene>
<reference evidence="3" key="1">
    <citation type="submission" date="2005-09" db="EMBL/GenBank/DDBJ databases">
        <title>Complete sequence of chromosome 1 of Rhodobacter sphaeroides 2.4.1.</title>
        <authorList>
            <person name="Copeland A."/>
            <person name="Lucas S."/>
            <person name="Lapidus A."/>
            <person name="Barry K."/>
            <person name="Detter J.C."/>
            <person name="Glavina T."/>
            <person name="Hammon N."/>
            <person name="Israni S."/>
            <person name="Pitluck S."/>
            <person name="Richardson P."/>
            <person name="Mackenzie C."/>
            <person name="Choudhary M."/>
            <person name="Larimer F."/>
            <person name="Hauser L.J."/>
            <person name="Land M."/>
            <person name="Donohue T.J."/>
            <person name="Kaplan S."/>
        </authorList>
    </citation>
    <scope>NUCLEOTIDE SEQUENCE [LARGE SCALE GENOMIC DNA]</scope>
    <source>
        <strain>ATCC 17023 / DSM 158 / JCM 6121 / CCUG 31486 / LMG 2827 / NBRC 12203 / NCIMB 8253 / ATH 2.4.1.</strain>
    </source>
</reference>